<sequence>MSKGLPARQDMEKERETLQAWKERVGQELDRVVAFWMEHSHDQEHGGFFTCLGREGRVYDDLKYVWLQGRQVWMYCRLYRTFERFRHAQLLDAAKAGGEFLLRYARVAPPGKKCAFVLTRDGRPVKVQRTIFSECFYTMAMNELWRATGEVRYQTEAVEMMDQIVHWVQEDASGLGRPQLQGAPAAEPMAVPMMLLNLVEQLGEADEELAGKYAELGDWCARRILQHVQRDGQAVLENVSEGGKELPGCLGRQQNPGHTLEAGWFLLRHCIRKGDPELRAHVIDKFLLLPFHSGWDPDHGGLFYFQDADNFCPTQLEWAMKLWWPHSEAMIAFLMGYSDSGDPVLLRLFYQVAEYTFRQFRDPEYGEWFGYLSREGKVALSIKGGPFKGCFHVPRCLAMCEEMLGALLSRPAPAPSPAPTPACRGAE</sequence>
<protein>
    <recommendedName>
        <fullName>N-acylglucosamine 2-epimerase</fullName>
        <shortName>AGE</shortName>
        <ecNumber evidence="1 2 5">5.1.3.8</ecNumber>
    </recommendedName>
    <alternativeName>
        <fullName>GlcNAc 2-epimerase</fullName>
    </alternativeName>
    <alternativeName>
        <fullName>N-acetyl-D-glucosamine 2-epimerase</fullName>
    </alternativeName>
    <alternativeName>
        <fullName>Renin-binding protein</fullName>
        <shortName>RnBP</shortName>
    </alternativeName>
</protein>
<proteinExistence type="evidence at protein level"/>
<dbReference type="EC" id="5.1.3.8" evidence="1 2 5"/>
<dbReference type="EMBL" id="AK298125">
    <property type="protein sequence ID" value="BAG60405.1"/>
    <property type="molecule type" value="mRNA"/>
</dbReference>
<dbReference type="EMBL" id="KF510655">
    <property type="status" value="NOT_ANNOTATED_CDS"/>
    <property type="molecule type" value="Genomic_DNA"/>
</dbReference>
<dbReference type="EMBL" id="U52112">
    <property type="status" value="NOT_ANNOTATED_CDS"/>
    <property type="molecule type" value="Genomic_DNA"/>
</dbReference>
<dbReference type="EMBL" id="BC015558">
    <property type="protein sequence ID" value="AAH15558.1"/>
    <property type="molecule type" value="mRNA"/>
</dbReference>
<dbReference type="EMBL" id="D10232">
    <property type="protein sequence ID" value="BAA01082.1"/>
    <property type="molecule type" value="mRNA"/>
</dbReference>
<dbReference type="CCDS" id="CCDS14738.2">
    <molecule id="P51606-1"/>
</dbReference>
<dbReference type="PIR" id="JX0188">
    <property type="entry name" value="JX0188"/>
</dbReference>
<dbReference type="RefSeq" id="NP_002901.2">
    <molecule id="P51606-1"/>
    <property type="nucleotide sequence ID" value="NM_002910.6"/>
</dbReference>
<dbReference type="RefSeq" id="XP_016885187.1">
    <molecule id="P51606-3"/>
    <property type="nucleotide sequence ID" value="XM_017029698.2"/>
</dbReference>
<dbReference type="RefSeq" id="XP_054183446.1">
    <molecule id="P51606-3"/>
    <property type="nucleotide sequence ID" value="XM_054327471.1"/>
</dbReference>
<dbReference type="SMR" id="P51606"/>
<dbReference type="BioGRID" id="111905">
    <property type="interactions" value="6"/>
</dbReference>
<dbReference type="FunCoup" id="P51606">
    <property type="interactions" value="105"/>
</dbReference>
<dbReference type="IntAct" id="P51606">
    <property type="interactions" value="5"/>
</dbReference>
<dbReference type="STRING" id="9606.ENSP00000377303"/>
<dbReference type="DrugBank" id="DB00141">
    <property type="generic name" value="N-Acetylglucosamine"/>
</dbReference>
<dbReference type="GlyGen" id="P51606">
    <property type="glycosylation" value="2 sites, 1 O-linked glycan (1 site)"/>
</dbReference>
<dbReference type="iPTMnet" id="P51606"/>
<dbReference type="PhosphoSitePlus" id="P51606"/>
<dbReference type="BioMuta" id="RENBP"/>
<dbReference type="DMDM" id="294862458"/>
<dbReference type="jPOST" id="P51606"/>
<dbReference type="MassIVE" id="P51606"/>
<dbReference type="PaxDb" id="9606-ENSP00000377303"/>
<dbReference type="PeptideAtlas" id="P51606"/>
<dbReference type="ProteomicsDB" id="56342">
    <molecule id="P51606-1"/>
</dbReference>
<dbReference type="ProteomicsDB" id="56343">
    <molecule id="P51606-2"/>
</dbReference>
<dbReference type="Pumba" id="P51606"/>
<dbReference type="Antibodypedia" id="413">
    <property type="antibodies" value="119 antibodies from 16 providers"/>
</dbReference>
<dbReference type="DNASU" id="5973"/>
<dbReference type="Ensembl" id="ENST00000393700.8">
    <molecule id="P51606-1"/>
    <property type="protein sequence ID" value="ENSP00000377303.3"/>
    <property type="gene ID" value="ENSG00000102032.13"/>
</dbReference>
<dbReference type="GeneID" id="5973"/>
<dbReference type="KEGG" id="hsa:5973"/>
<dbReference type="MANE-Select" id="ENST00000393700.8">
    <property type="protein sequence ID" value="ENSP00000377303.3"/>
    <property type="RefSeq nucleotide sequence ID" value="NM_002910.6"/>
    <property type="RefSeq protein sequence ID" value="NP_002901.2"/>
</dbReference>
<dbReference type="UCSC" id="uc004fjo.3">
    <molecule id="P51606-1"/>
    <property type="organism name" value="human"/>
</dbReference>
<dbReference type="AGR" id="HGNC:9959"/>
<dbReference type="CTD" id="5973"/>
<dbReference type="DisGeNET" id="5973"/>
<dbReference type="GeneCards" id="RENBP"/>
<dbReference type="HGNC" id="HGNC:9959">
    <property type="gene designation" value="RENBP"/>
</dbReference>
<dbReference type="HPA" id="ENSG00000102032">
    <property type="expression patterns" value="Tissue enhanced (kidney, lymphoid tissue)"/>
</dbReference>
<dbReference type="MIM" id="312420">
    <property type="type" value="gene"/>
</dbReference>
<dbReference type="neXtProt" id="NX_P51606"/>
<dbReference type="OpenTargets" id="ENSG00000102032"/>
<dbReference type="PharmGKB" id="PA34325"/>
<dbReference type="VEuPathDB" id="HostDB:ENSG00000102032"/>
<dbReference type="eggNOG" id="ENOG502QSDA">
    <property type="taxonomic scope" value="Eukaryota"/>
</dbReference>
<dbReference type="GeneTree" id="ENSGT00390000013740"/>
<dbReference type="HOGENOM" id="CLU_046651_0_0_1"/>
<dbReference type="InParanoid" id="P51606"/>
<dbReference type="OMA" id="QPYNIFS"/>
<dbReference type="OrthoDB" id="414129at2759"/>
<dbReference type="PAN-GO" id="P51606">
    <property type="GO annotations" value="4 GO annotations based on evolutionary models"/>
</dbReference>
<dbReference type="PhylomeDB" id="P51606"/>
<dbReference type="TreeFam" id="TF329027"/>
<dbReference type="BRENDA" id="5.1.3.8">
    <property type="organism ID" value="2681"/>
</dbReference>
<dbReference type="PathwayCommons" id="P51606"/>
<dbReference type="Reactome" id="R-HSA-446210">
    <property type="pathway name" value="Synthesis of UDP-N-acetyl-glucosamine"/>
</dbReference>
<dbReference type="SABIO-RK" id="P51606"/>
<dbReference type="SignaLink" id="P51606"/>
<dbReference type="UniPathway" id="UPA00629"/>
<dbReference type="BioGRID-ORCS" id="5973">
    <property type="hits" value="14 hits in 779 CRISPR screens"/>
</dbReference>
<dbReference type="GeneWiki" id="RENBP"/>
<dbReference type="GenomeRNAi" id="5973"/>
<dbReference type="Pharos" id="P51606">
    <property type="development level" value="Tbio"/>
</dbReference>
<dbReference type="PRO" id="PR:P51606"/>
<dbReference type="Proteomes" id="UP000005640">
    <property type="component" value="Chromosome X"/>
</dbReference>
<dbReference type="RNAct" id="P51606">
    <property type="molecule type" value="protein"/>
</dbReference>
<dbReference type="Bgee" id="ENSG00000102032">
    <property type="expression patterns" value="Expressed in monocyte and 102 other cell types or tissues"/>
</dbReference>
<dbReference type="ExpressionAtlas" id="P51606">
    <property type="expression patterns" value="baseline and differential"/>
</dbReference>
<dbReference type="GO" id="GO:0005829">
    <property type="term" value="C:cytosol"/>
    <property type="evidence" value="ECO:0000304"/>
    <property type="project" value="Reactome"/>
</dbReference>
<dbReference type="GO" id="GO:0070062">
    <property type="term" value="C:extracellular exosome"/>
    <property type="evidence" value="ECO:0007005"/>
    <property type="project" value="UniProtKB"/>
</dbReference>
<dbReference type="GO" id="GO:0004866">
    <property type="term" value="F:endopeptidase inhibitor activity"/>
    <property type="evidence" value="ECO:0000304"/>
    <property type="project" value="ProtInc"/>
</dbReference>
<dbReference type="GO" id="GO:0042802">
    <property type="term" value="F:identical protein binding"/>
    <property type="evidence" value="ECO:0000314"/>
    <property type="project" value="UniProtKB"/>
</dbReference>
<dbReference type="GO" id="GO:0050121">
    <property type="term" value="F:N-acylglucosamine 2-epimerase activity"/>
    <property type="evidence" value="ECO:0000314"/>
    <property type="project" value="UniProtKB"/>
</dbReference>
<dbReference type="GO" id="GO:0030414">
    <property type="term" value="F:peptidase inhibitor activity"/>
    <property type="evidence" value="ECO:0000314"/>
    <property type="project" value="UniProtKB"/>
</dbReference>
<dbReference type="GO" id="GO:0005975">
    <property type="term" value="P:carbohydrate metabolic process"/>
    <property type="evidence" value="ECO:0007669"/>
    <property type="project" value="InterPro"/>
</dbReference>
<dbReference type="GO" id="GO:0006044">
    <property type="term" value="P:N-acetylglucosamine metabolic process"/>
    <property type="evidence" value="ECO:0000318"/>
    <property type="project" value="GO_Central"/>
</dbReference>
<dbReference type="GO" id="GO:0006051">
    <property type="term" value="P:N-acetylmannosamine metabolic process"/>
    <property type="evidence" value="ECO:0000318"/>
    <property type="project" value="GO_Central"/>
</dbReference>
<dbReference type="GO" id="GO:0019262">
    <property type="term" value="P:N-acetylneuraminate catabolic process"/>
    <property type="evidence" value="ECO:0000304"/>
    <property type="project" value="UniProtKB"/>
</dbReference>
<dbReference type="GO" id="GO:0008217">
    <property type="term" value="P:regulation of blood pressure"/>
    <property type="evidence" value="ECO:0000304"/>
    <property type="project" value="ProtInc"/>
</dbReference>
<dbReference type="CDD" id="cd00249">
    <property type="entry name" value="AGE"/>
    <property type="match status" value="1"/>
</dbReference>
<dbReference type="FunFam" id="1.50.10.10:FF:000021">
    <property type="entry name" value="N-acylglucosamine 2-epimerase"/>
    <property type="match status" value="1"/>
</dbReference>
<dbReference type="Gene3D" id="1.50.10.10">
    <property type="match status" value="1"/>
</dbReference>
<dbReference type="InterPro" id="IPR008928">
    <property type="entry name" value="6-hairpin_glycosidase_sf"/>
</dbReference>
<dbReference type="InterPro" id="IPR012341">
    <property type="entry name" value="6hp_glycosidase-like_sf"/>
</dbReference>
<dbReference type="InterPro" id="IPR010819">
    <property type="entry name" value="AGE/CE"/>
</dbReference>
<dbReference type="InterPro" id="IPR034116">
    <property type="entry name" value="AGE_dom"/>
</dbReference>
<dbReference type="PANTHER" id="PTHR15108">
    <property type="entry name" value="N-ACYLGLUCOSAMINE-2-EPIMERASE"/>
    <property type="match status" value="1"/>
</dbReference>
<dbReference type="Pfam" id="PF07221">
    <property type="entry name" value="GlcNAc_2-epim"/>
    <property type="match status" value="1"/>
</dbReference>
<dbReference type="SUPFAM" id="SSF48208">
    <property type="entry name" value="Six-hairpin glycosidases"/>
    <property type="match status" value="1"/>
</dbReference>
<name>RENBP_HUMAN</name>
<gene>
    <name type="primary">RENBP</name>
</gene>
<evidence type="ECO:0000269" key="1">
    <source>
    </source>
</evidence>
<evidence type="ECO:0000269" key="2">
    <source>
    </source>
</evidence>
<evidence type="ECO:0000269" key="3">
    <source>
    </source>
</evidence>
<evidence type="ECO:0000269" key="4">
    <source>
    </source>
</evidence>
<evidence type="ECO:0000269" key="5">
    <source>
    </source>
</evidence>
<evidence type="ECO:0000303" key="6">
    <source>
    </source>
</evidence>
<evidence type="ECO:0000305" key="7"/>
<evidence type="ECO:0000305" key="8">
    <source>
    </source>
</evidence>
<evidence type="ECO:0000305" key="9">
    <source>
    </source>
</evidence>
<organism>
    <name type="scientific">Homo sapiens</name>
    <name type="common">Human</name>
    <dbReference type="NCBI Taxonomy" id="9606"/>
    <lineage>
        <taxon>Eukaryota</taxon>
        <taxon>Metazoa</taxon>
        <taxon>Chordata</taxon>
        <taxon>Craniata</taxon>
        <taxon>Vertebrata</taxon>
        <taxon>Euteleostomi</taxon>
        <taxon>Mammalia</taxon>
        <taxon>Eutheria</taxon>
        <taxon>Euarchontoglires</taxon>
        <taxon>Primates</taxon>
        <taxon>Haplorrhini</taxon>
        <taxon>Catarrhini</taxon>
        <taxon>Hominidae</taxon>
        <taxon>Homo</taxon>
    </lineage>
</organism>
<comment type="function">
    <text evidence="1 2 5">Catalyzes the interconversion of N-acetylglucosamine to N-acetylmannosamine (PubMed:10502668, PubMed:12499362, PubMed:9990133). Involved in the N-glycolylneuraminic acid (Neu5Gc) degradation pathway: although human is not able to catalyze formation of Neu5Gc due to the inactive CMAHP enzyme, Neu5Gc is present in food and must be degraded (PubMed:9990133).</text>
</comment>
<comment type="catalytic activity">
    <reaction evidence="1 2 5">
        <text>an N-acyl-D-glucosamine = an N-acyl-D-mannosamine</text>
        <dbReference type="Rhea" id="RHEA:19033"/>
        <dbReference type="ChEBI" id="CHEBI:16062"/>
        <dbReference type="ChEBI" id="CHEBI:17274"/>
        <dbReference type="EC" id="5.1.3.8"/>
    </reaction>
    <physiologicalReaction direction="left-to-right" evidence="9">
        <dbReference type="Rhea" id="RHEA:19034"/>
    </physiologicalReaction>
    <physiologicalReaction direction="right-to-left" evidence="8">
        <dbReference type="Rhea" id="RHEA:19035"/>
    </physiologicalReaction>
</comment>
<comment type="activity regulation">
    <text evidence="1">Inhibited by N-ethylmaleimide, 5,5'-dithiobis-2-nitrobenzoate and iodoacetic acid.</text>
</comment>
<comment type="biophysicochemical properties">
    <kinetics>
        <KM evidence="5">21.3 mM for N-acyl-D-glucosamine</KM>
        <KM evidence="5">12.8 mM for N-acyl-D-mannosamine</KM>
        <KM evidence="2">4.3 mM for N-acyl-D-mannosamine</KM>
    </kinetics>
</comment>
<comment type="pathway">
    <text evidence="4">Amino-sugar metabolism; N-acetylneuraminate degradation.</text>
</comment>
<comment type="subunit">
    <text evidence="3 5">Homodimer (PubMed:1723410, PubMed:9990133). Forms a heterodimer with renin and inhibits its activity (PubMed:1723410, PubMed:9990133).</text>
</comment>
<comment type="interaction">
    <interactant intactId="EBI-752022">
        <id>P51606</id>
    </interactant>
    <interactant intactId="EBI-12137487">
        <id>Q9UN30-2</id>
        <label>SCML1</label>
    </interactant>
    <organismsDiffer>false</organismsDiffer>
    <experiments>5</experiments>
</comment>
<comment type="alternative products">
    <event type="alternative splicing"/>
    <event type="alternative initiation"/>
    <isoform>
        <id>P51606-1</id>
        <name>1</name>
        <sequence type="displayed"/>
    </isoform>
    <isoform>
        <id>P51606-2</id>
        <name>2</name>
        <sequence type="described" ref="VSP_039022 VSP_039023"/>
    </isoform>
    <isoform>
        <id>P51606-3</id>
        <name>3</name>
        <sequence type="described" ref="VSP_062189"/>
    </isoform>
</comment>
<comment type="similarity">
    <text evidence="7">Belongs to the N-acylglucosamine 2-epimerase family.</text>
</comment>
<reference key="1">
    <citation type="journal article" date="2004" name="Nat. Genet.">
        <title>Complete sequencing and characterization of 21,243 full-length human cDNAs.</title>
        <authorList>
            <person name="Ota T."/>
            <person name="Suzuki Y."/>
            <person name="Nishikawa T."/>
            <person name="Otsuki T."/>
            <person name="Sugiyama T."/>
            <person name="Irie R."/>
            <person name="Wakamatsu A."/>
            <person name="Hayashi K."/>
            <person name="Sato H."/>
            <person name="Nagai K."/>
            <person name="Kimura K."/>
            <person name="Makita H."/>
            <person name="Sekine M."/>
            <person name="Obayashi M."/>
            <person name="Nishi T."/>
            <person name="Shibahara T."/>
            <person name="Tanaka T."/>
            <person name="Ishii S."/>
            <person name="Yamamoto J."/>
            <person name="Saito K."/>
            <person name="Kawai Y."/>
            <person name="Isono Y."/>
            <person name="Nakamura Y."/>
            <person name="Nagahari K."/>
            <person name="Murakami K."/>
            <person name="Yasuda T."/>
            <person name="Iwayanagi T."/>
            <person name="Wagatsuma M."/>
            <person name="Shiratori A."/>
            <person name="Sudo H."/>
            <person name="Hosoiri T."/>
            <person name="Kaku Y."/>
            <person name="Kodaira H."/>
            <person name="Kondo H."/>
            <person name="Sugawara M."/>
            <person name="Takahashi M."/>
            <person name="Kanda K."/>
            <person name="Yokoi T."/>
            <person name="Furuya T."/>
            <person name="Kikkawa E."/>
            <person name="Omura Y."/>
            <person name="Abe K."/>
            <person name="Kamihara K."/>
            <person name="Katsuta N."/>
            <person name="Sato K."/>
            <person name="Tanikawa M."/>
            <person name="Yamazaki M."/>
            <person name="Ninomiya K."/>
            <person name="Ishibashi T."/>
            <person name="Yamashita H."/>
            <person name="Murakawa K."/>
            <person name="Fujimori K."/>
            <person name="Tanai H."/>
            <person name="Kimata M."/>
            <person name="Watanabe M."/>
            <person name="Hiraoka S."/>
            <person name="Chiba Y."/>
            <person name="Ishida S."/>
            <person name="Ono Y."/>
            <person name="Takiguchi S."/>
            <person name="Watanabe S."/>
            <person name="Yosida M."/>
            <person name="Hotuta T."/>
            <person name="Kusano J."/>
            <person name="Kanehori K."/>
            <person name="Takahashi-Fujii A."/>
            <person name="Hara H."/>
            <person name="Tanase T.-O."/>
            <person name="Nomura Y."/>
            <person name="Togiya S."/>
            <person name="Komai F."/>
            <person name="Hara R."/>
            <person name="Takeuchi K."/>
            <person name="Arita M."/>
            <person name="Imose N."/>
            <person name="Musashino K."/>
            <person name="Yuuki H."/>
            <person name="Oshima A."/>
            <person name="Sasaki N."/>
            <person name="Aotsuka S."/>
            <person name="Yoshikawa Y."/>
            <person name="Matsunawa H."/>
            <person name="Ichihara T."/>
            <person name="Shiohata N."/>
            <person name="Sano S."/>
            <person name="Moriya S."/>
            <person name="Momiyama H."/>
            <person name="Satoh N."/>
            <person name="Takami S."/>
            <person name="Terashima Y."/>
            <person name="Suzuki O."/>
            <person name="Nakagawa S."/>
            <person name="Senoh A."/>
            <person name="Mizoguchi H."/>
            <person name="Goto Y."/>
            <person name="Shimizu F."/>
            <person name="Wakebe H."/>
            <person name="Hishigaki H."/>
            <person name="Watanabe T."/>
            <person name="Sugiyama A."/>
            <person name="Takemoto M."/>
            <person name="Kawakami B."/>
            <person name="Yamazaki M."/>
            <person name="Watanabe K."/>
            <person name="Kumagai A."/>
            <person name="Itakura S."/>
            <person name="Fukuzumi Y."/>
            <person name="Fujimori Y."/>
            <person name="Komiyama M."/>
            <person name="Tashiro H."/>
            <person name="Tanigami A."/>
            <person name="Fujiwara T."/>
            <person name="Ono T."/>
            <person name="Yamada K."/>
            <person name="Fujii Y."/>
            <person name="Ozaki K."/>
            <person name="Hirao M."/>
            <person name="Ohmori Y."/>
            <person name="Kawabata A."/>
            <person name="Hikiji T."/>
            <person name="Kobatake N."/>
            <person name="Inagaki H."/>
            <person name="Ikema Y."/>
            <person name="Okamoto S."/>
            <person name="Okitani R."/>
            <person name="Kawakami T."/>
            <person name="Noguchi S."/>
            <person name="Itoh T."/>
            <person name="Shigeta K."/>
            <person name="Senba T."/>
            <person name="Matsumura K."/>
            <person name="Nakajima Y."/>
            <person name="Mizuno T."/>
            <person name="Morinaga M."/>
            <person name="Sasaki M."/>
            <person name="Togashi T."/>
            <person name="Oyama M."/>
            <person name="Hata H."/>
            <person name="Watanabe M."/>
            <person name="Komatsu T."/>
            <person name="Mizushima-Sugano J."/>
            <person name="Satoh T."/>
            <person name="Shirai Y."/>
            <person name="Takahashi Y."/>
            <person name="Nakagawa K."/>
            <person name="Okumura K."/>
            <person name="Nagase T."/>
            <person name="Nomura N."/>
            <person name="Kikuchi H."/>
            <person name="Masuho Y."/>
            <person name="Yamashita R."/>
            <person name="Nakai K."/>
            <person name="Yada T."/>
            <person name="Nakamura Y."/>
            <person name="Ohara O."/>
            <person name="Isogai T."/>
            <person name="Sugano S."/>
        </authorList>
    </citation>
    <scope>NUCLEOTIDE SEQUENCE [LARGE SCALE MRNA] (ISOFORM 2)</scope>
    <source>
        <tissue>Lung</tissue>
    </source>
</reference>
<reference key="2">
    <citation type="journal article" date="2005" name="Nature">
        <title>The DNA sequence of the human X chromosome.</title>
        <authorList>
            <person name="Ross M.T."/>
            <person name="Grafham D.V."/>
            <person name="Coffey A.J."/>
            <person name="Scherer S."/>
            <person name="McLay K."/>
            <person name="Muzny D."/>
            <person name="Platzer M."/>
            <person name="Howell G.R."/>
            <person name="Burrows C."/>
            <person name="Bird C.P."/>
            <person name="Frankish A."/>
            <person name="Lovell F.L."/>
            <person name="Howe K.L."/>
            <person name="Ashurst J.L."/>
            <person name="Fulton R.S."/>
            <person name="Sudbrak R."/>
            <person name="Wen G."/>
            <person name="Jones M.C."/>
            <person name="Hurles M.E."/>
            <person name="Andrews T.D."/>
            <person name="Scott C.E."/>
            <person name="Searle S."/>
            <person name="Ramser J."/>
            <person name="Whittaker A."/>
            <person name="Deadman R."/>
            <person name="Carter N.P."/>
            <person name="Hunt S.E."/>
            <person name="Chen R."/>
            <person name="Cree A."/>
            <person name="Gunaratne P."/>
            <person name="Havlak P."/>
            <person name="Hodgson A."/>
            <person name="Metzker M.L."/>
            <person name="Richards S."/>
            <person name="Scott G."/>
            <person name="Steffen D."/>
            <person name="Sodergren E."/>
            <person name="Wheeler D.A."/>
            <person name="Worley K.C."/>
            <person name="Ainscough R."/>
            <person name="Ambrose K.D."/>
            <person name="Ansari-Lari M.A."/>
            <person name="Aradhya S."/>
            <person name="Ashwell R.I."/>
            <person name="Babbage A.K."/>
            <person name="Bagguley C.L."/>
            <person name="Ballabio A."/>
            <person name="Banerjee R."/>
            <person name="Barker G.E."/>
            <person name="Barlow K.F."/>
            <person name="Barrett I.P."/>
            <person name="Bates K.N."/>
            <person name="Beare D.M."/>
            <person name="Beasley H."/>
            <person name="Beasley O."/>
            <person name="Beck A."/>
            <person name="Bethel G."/>
            <person name="Blechschmidt K."/>
            <person name="Brady N."/>
            <person name="Bray-Allen S."/>
            <person name="Bridgeman A.M."/>
            <person name="Brown A.J."/>
            <person name="Brown M.J."/>
            <person name="Bonnin D."/>
            <person name="Bruford E.A."/>
            <person name="Buhay C."/>
            <person name="Burch P."/>
            <person name="Burford D."/>
            <person name="Burgess J."/>
            <person name="Burrill W."/>
            <person name="Burton J."/>
            <person name="Bye J.M."/>
            <person name="Carder C."/>
            <person name="Carrel L."/>
            <person name="Chako J."/>
            <person name="Chapman J.C."/>
            <person name="Chavez D."/>
            <person name="Chen E."/>
            <person name="Chen G."/>
            <person name="Chen Y."/>
            <person name="Chen Z."/>
            <person name="Chinault C."/>
            <person name="Ciccodicola A."/>
            <person name="Clark S.Y."/>
            <person name="Clarke G."/>
            <person name="Clee C.M."/>
            <person name="Clegg S."/>
            <person name="Clerc-Blankenburg K."/>
            <person name="Clifford K."/>
            <person name="Cobley V."/>
            <person name="Cole C.G."/>
            <person name="Conquer J.S."/>
            <person name="Corby N."/>
            <person name="Connor R.E."/>
            <person name="David R."/>
            <person name="Davies J."/>
            <person name="Davis C."/>
            <person name="Davis J."/>
            <person name="Delgado O."/>
            <person name="Deshazo D."/>
            <person name="Dhami P."/>
            <person name="Ding Y."/>
            <person name="Dinh H."/>
            <person name="Dodsworth S."/>
            <person name="Draper H."/>
            <person name="Dugan-Rocha S."/>
            <person name="Dunham A."/>
            <person name="Dunn M."/>
            <person name="Durbin K.J."/>
            <person name="Dutta I."/>
            <person name="Eades T."/>
            <person name="Ellwood M."/>
            <person name="Emery-Cohen A."/>
            <person name="Errington H."/>
            <person name="Evans K.L."/>
            <person name="Faulkner L."/>
            <person name="Francis F."/>
            <person name="Frankland J."/>
            <person name="Fraser A.E."/>
            <person name="Galgoczy P."/>
            <person name="Gilbert J."/>
            <person name="Gill R."/>
            <person name="Gloeckner G."/>
            <person name="Gregory S.G."/>
            <person name="Gribble S."/>
            <person name="Griffiths C."/>
            <person name="Grocock R."/>
            <person name="Gu Y."/>
            <person name="Gwilliam R."/>
            <person name="Hamilton C."/>
            <person name="Hart E.A."/>
            <person name="Hawes A."/>
            <person name="Heath P.D."/>
            <person name="Heitmann K."/>
            <person name="Hennig S."/>
            <person name="Hernandez J."/>
            <person name="Hinzmann B."/>
            <person name="Ho S."/>
            <person name="Hoffs M."/>
            <person name="Howden P.J."/>
            <person name="Huckle E.J."/>
            <person name="Hume J."/>
            <person name="Hunt P.J."/>
            <person name="Hunt A.R."/>
            <person name="Isherwood J."/>
            <person name="Jacob L."/>
            <person name="Johnson D."/>
            <person name="Jones S."/>
            <person name="de Jong P.J."/>
            <person name="Joseph S.S."/>
            <person name="Keenan S."/>
            <person name="Kelly S."/>
            <person name="Kershaw J.K."/>
            <person name="Khan Z."/>
            <person name="Kioschis P."/>
            <person name="Klages S."/>
            <person name="Knights A.J."/>
            <person name="Kosiura A."/>
            <person name="Kovar-Smith C."/>
            <person name="Laird G.K."/>
            <person name="Langford C."/>
            <person name="Lawlor S."/>
            <person name="Leversha M."/>
            <person name="Lewis L."/>
            <person name="Liu W."/>
            <person name="Lloyd C."/>
            <person name="Lloyd D.M."/>
            <person name="Loulseged H."/>
            <person name="Loveland J.E."/>
            <person name="Lovell J.D."/>
            <person name="Lozado R."/>
            <person name="Lu J."/>
            <person name="Lyne R."/>
            <person name="Ma J."/>
            <person name="Maheshwari M."/>
            <person name="Matthews L.H."/>
            <person name="McDowall J."/>
            <person name="McLaren S."/>
            <person name="McMurray A."/>
            <person name="Meidl P."/>
            <person name="Meitinger T."/>
            <person name="Milne S."/>
            <person name="Miner G."/>
            <person name="Mistry S.L."/>
            <person name="Morgan M."/>
            <person name="Morris S."/>
            <person name="Mueller I."/>
            <person name="Mullikin J.C."/>
            <person name="Nguyen N."/>
            <person name="Nordsiek G."/>
            <person name="Nyakatura G."/>
            <person name="O'dell C.N."/>
            <person name="Okwuonu G."/>
            <person name="Palmer S."/>
            <person name="Pandian R."/>
            <person name="Parker D."/>
            <person name="Parrish J."/>
            <person name="Pasternak S."/>
            <person name="Patel D."/>
            <person name="Pearce A.V."/>
            <person name="Pearson D.M."/>
            <person name="Pelan S.E."/>
            <person name="Perez L."/>
            <person name="Porter K.M."/>
            <person name="Ramsey Y."/>
            <person name="Reichwald K."/>
            <person name="Rhodes S."/>
            <person name="Ridler K.A."/>
            <person name="Schlessinger D."/>
            <person name="Schueler M.G."/>
            <person name="Sehra H.K."/>
            <person name="Shaw-Smith C."/>
            <person name="Shen H."/>
            <person name="Sheridan E.M."/>
            <person name="Shownkeen R."/>
            <person name="Skuce C.D."/>
            <person name="Smith M.L."/>
            <person name="Sotheran E.C."/>
            <person name="Steingruber H.E."/>
            <person name="Steward C.A."/>
            <person name="Storey R."/>
            <person name="Swann R.M."/>
            <person name="Swarbreck D."/>
            <person name="Tabor P.E."/>
            <person name="Taudien S."/>
            <person name="Taylor T."/>
            <person name="Teague B."/>
            <person name="Thomas K."/>
            <person name="Thorpe A."/>
            <person name="Timms K."/>
            <person name="Tracey A."/>
            <person name="Trevanion S."/>
            <person name="Tromans A.C."/>
            <person name="d'Urso M."/>
            <person name="Verduzco D."/>
            <person name="Villasana D."/>
            <person name="Waldron L."/>
            <person name="Wall M."/>
            <person name="Wang Q."/>
            <person name="Warren J."/>
            <person name="Warry G.L."/>
            <person name="Wei X."/>
            <person name="West A."/>
            <person name="Whitehead S.L."/>
            <person name="Whiteley M.N."/>
            <person name="Wilkinson J.E."/>
            <person name="Willey D.L."/>
            <person name="Williams G."/>
            <person name="Williams L."/>
            <person name="Williamson A."/>
            <person name="Williamson H."/>
            <person name="Wilming L."/>
            <person name="Woodmansey R.L."/>
            <person name="Wray P.W."/>
            <person name="Yen J."/>
            <person name="Zhang J."/>
            <person name="Zhou J."/>
            <person name="Zoghbi H."/>
            <person name="Zorilla S."/>
            <person name="Buck D."/>
            <person name="Reinhardt R."/>
            <person name="Poustka A."/>
            <person name="Rosenthal A."/>
            <person name="Lehrach H."/>
            <person name="Meindl A."/>
            <person name="Minx P.J."/>
            <person name="Hillier L.W."/>
            <person name="Willard H.F."/>
            <person name="Wilson R.K."/>
            <person name="Waterston R.H."/>
            <person name="Rice C.M."/>
            <person name="Vaudin M."/>
            <person name="Coulson A."/>
            <person name="Nelson D.L."/>
            <person name="Weinstock G."/>
            <person name="Sulston J.E."/>
            <person name="Durbin R.M."/>
            <person name="Hubbard T."/>
            <person name="Gibbs R.A."/>
            <person name="Beck S."/>
            <person name="Rogers J."/>
            <person name="Bentley D.R."/>
        </authorList>
    </citation>
    <scope>NUCLEOTIDE SEQUENCE [LARGE SCALE GENOMIC DNA]</scope>
</reference>
<reference key="3">
    <citation type="journal article" date="2004" name="Genome Res.">
        <title>The status, quality, and expansion of the NIH full-length cDNA project: the Mammalian Gene Collection (MGC).</title>
        <authorList>
            <consortium name="The MGC Project Team"/>
        </authorList>
    </citation>
    <scope>NUCLEOTIDE SEQUENCE [LARGE SCALE MRNA] (ISOFORM 3)</scope>
    <source>
        <tissue>Skin</tissue>
    </source>
</reference>
<reference key="4">
    <citation type="journal article" date="1991" name="J. Biochem.">
        <title>Genetic and molecular properties of human and rat renin-binding proteins with reference to the function of the leucine zipper motif.</title>
        <authorList>
            <person name="Inoue H."/>
            <person name="Takahashi S."/>
            <person name="Fukui K."/>
            <person name="Miyake Y."/>
        </authorList>
    </citation>
    <scope>NUCLEOTIDE SEQUENCE [MRNA] (ISOFORM 3)</scope>
    <scope>SUBUNIT</scope>
</reference>
<reference key="5">
    <citation type="journal article" date="1999" name="J. Biochem.">
        <title>Human renin-binding protein is the enzyme N-acetyl-D-glucosamine 2-epimerase.</title>
        <authorList>
            <person name="Takahashi S."/>
            <person name="Takahashi K."/>
            <person name="Kaneko T."/>
            <person name="Ogasawara H."/>
            <person name="Shindo S."/>
            <person name="Kobayashi M."/>
        </authorList>
    </citation>
    <scope>PROTEIN SEQUENCE OF 11-30</scope>
    <scope>FUNCTION</scope>
    <scope>SUBUNIT</scope>
    <scope>CATALYTIC ACTIVITY</scope>
    <scope>BIOPHYSICOCHEMICAL PROPERTIES</scope>
</reference>
<reference key="6">
    <citation type="journal article" date="2012" name="J. Biol. Chem.">
        <title>Metabolism of vertebrate amino sugars with N-glycolyl groups: elucidating the intracellular fate of the non-human sialic acid N-glycolylneuraminic acid.</title>
        <authorList>
            <person name="Bergfeld A.K."/>
            <person name="Pearce O.M."/>
            <person name="Diaz S.L."/>
            <person name="Pham T."/>
            <person name="Varki A."/>
        </authorList>
    </citation>
    <scope>PATHWAY</scope>
    <scope>FUNCTION</scope>
</reference>
<reference key="7">
    <citation type="journal article" date="1999" name="J. Biochem.">
        <title>Identification of cysteine-380 as the essential residue for the human N-acetyl-D-glucosamine 2-epimerase (renin binding protein).</title>
        <authorList>
            <person name="Takahashi S."/>
            <person name="Takahashi K."/>
            <person name="Kaneko T."/>
            <person name="Ogasawara H."/>
            <person name="Shindo S."/>
            <person name="Saito K."/>
            <person name="Kobayashi M."/>
        </authorList>
    </citation>
    <scope>FUNCTION</scope>
    <scope>CATALYTIC ACTIVITY</scope>
    <scope>ACTIVITY REGULATION</scope>
    <scope>MUTAGENESIS OF CYS-51; CYS-76; CYS-114; CYS-135; CYS-220; CYS-249; CYS-312; CYS-390; CYS-396 AND CYS-400</scope>
    <scope>SITE</scope>
</reference>
<reference key="8">
    <citation type="journal article" date="2003" name="J. Biol. Chem.">
        <title>GlcNAc 2-epimerase can serve a catabolic role in sialic acid metabolism.</title>
        <authorList>
            <person name="Luchansky S.J."/>
            <person name="Yarema K.J."/>
            <person name="Takahashi S."/>
            <person name="Bertozzi C.R."/>
        </authorList>
    </citation>
    <scope>FUNCTION</scope>
    <scope>CATALYTIC ACTIVITY</scope>
    <scope>BIOPHYSICOCHEMICAL PROPERTIES</scope>
</reference>
<keyword id="KW-0024">Alternative initiation</keyword>
<keyword id="KW-0025">Alternative splicing</keyword>
<keyword id="KW-0903">Direct protein sequencing</keyword>
<keyword id="KW-0413">Isomerase</keyword>
<keyword id="KW-1267">Proteomics identification</keyword>
<keyword id="KW-1185">Reference proteome</keyword>
<accession>P51606</accession>
<accession>B4DNZ3</accession>
<accession>Q96BI6</accession>
<feature type="chain" id="PRO_0000208949" description="N-acylglucosamine 2-epimerase">
    <location>
        <begin position="1"/>
        <end position="427"/>
    </location>
</feature>
<feature type="region of interest" description="Leucine-zipper">
    <location>
        <begin position="195"/>
        <end position="216"/>
    </location>
</feature>
<feature type="site" description="Important for enzyme activity" evidence="1">
    <location>
        <position position="390"/>
    </location>
</feature>
<feature type="splice variant" id="VSP_062189" description="In isoform 3.">
    <location>
        <begin position="1"/>
        <end position="10"/>
    </location>
</feature>
<feature type="splice variant" id="VSP_039022" description="In isoform 2." evidence="6">
    <original>RDGQAVLENVSEGGKELPGCLGRQQ</original>
    <variation>ATRWKPAGFCSVIAFGKATPNFEPT</variation>
    <location>
        <begin position="230"/>
        <end position="254"/>
    </location>
</feature>
<feature type="splice variant" id="VSP_039023" description="In isoform 2." evidence="6">
    <location>
        <begin position="255"/>
        <end position="427"/>
    </location>
</feature>
<feature type="sequence variant" id="VAR_029339" description="In dbSNP:rs2229241.">
    <original>Q</original>
    <variation>R</variation>
    <location>
        <position position="169"/>
    </location>
</feature>
<feature type="sequence variant" id="VAR_049182" description="In dbSNP:rs2269371.">
    <original>D</original>
    <variation>G</variation>
    <location>
        <position position="284"/>
    </location>
</feature>
<feature type="mutagenesis site" description="Activity is similiar to wild-type." evidence="1">
    <original>C</original>
    <variation>S</variation>
    <location>
        <position position="51"/>
    </location>
</feature>
<feature type="mutagenesis site" description="Activity is similiar to wild-type." evidence="1">
    <original>C</original>
    <variation>S</variation>
    <location>
        <position position="76"/>
    </location>
</feature>
<feature type="mutagenesis site" description="Activity is about 26% of that of the wild-type." evidence="1">
    <original>C</original>
    <variation>S</variation>
    <location>
        <position position="114"/>
    </location>
</feature>
<feature type="mutagenesis site" description="Activity is similiar to wild-type." evidence="1">
    <original>C</original>
    <variation>S</variation>
    <location>
        <position position="135"/>
    </location>
</feature>
<feature type="mutagenesis site" description="Activity is similiar to wild-type." evidence="1">
    <original>C</original>
    <variation>S</variation>
    <location>
        <position position="220"/>
    </location>
</feature>
<feature type="mutagenesis site" description="Activity is similiar to wild-type." evidence="1">
    <original>C</original>
    <variation>S</variation>
    <location>
        <position position="249"/>
    </location>
</feature>
<feature type="mutagenesis site" description="Activity is similiar to wild-type." evidence="1">
    <original>C</original>
    <variation>S</variation>
    <location>
        <position position="312"/>
    </location>
</feature>
<feature type="mutagenesis site" description="Loss of enzyme activity." evidence="1">
    <original>C</original>
    <variation>S</variation>
    <location>
        <position position="390"/>
    </location>
</feature>
<feature type="mutagenesis site" description="Activity is similiar to wild-type." evidence="1">
    <original>C</original>
    <variation>S</variation>
    <location>
        <position position="396"/>
    </location>
</feature>
<feature type="mutagenesis site" description="Activity is similiar to wild-type." evidence="1">
    <original>C</original>
    <variation>S</variation>
    <location>
        <position position="400"/>
    </location>
</feature>
<feature type="sequence conflict" description="In Ref. 3; AAH15558." evidence="7" ref="3">
    <original>L</original>
    <variation>P</variation>
    <location>
        <position position="236"/>
    </location>
</feature>